<organism>
    <name type="scientific">Arabidopsis thaliana</name>
    <name type="common">Mouse-ear cress</name>
    <dbReference type="NCBI Taxonomy" id="3702"/>
    <lineage>
        <taxon>Eukaryota</taxon>
        <taxon>Viridiplantae</taxon>
        <taxon>Streptophyta</taxon>
        <taxon>Embryophyta</taxon>
        <taxon>Tracheophyta</taxon>
        <taxon>Spermatophyta</taxon>
        <taxon>Magnoliopsida</taxon>
        <taxon>eudicotyledons</taxon>
        <taxon>Gunneridae</taxon>
        <taxon>Pentapetalae</taxon>
        <taxon>rosids</taxon>
        <taxon>malvids</taxon>
        <taxon>Brassicales</taxon>
        <taxon>Brassicaceae</taxon>
        <taxon>Camelineae</taxon>
        <taxon>Arabidopsis</taxon>
    </lineage>
</organism>
<proteinExistence type="evidence at transcript level"/>
<accession>Q9LFM6</accession>
<comment type="subcellular location">
    <subcellularLocation>
        <location evidence="2">Mitochondrion</location>
    </subcellularLocation>
</comment>
<comment type="similarity">
    <text evidence="2">Belongs to the PPR family. P subfamily.</text>
</comment>
<comment type="online information" name="Pentatricopeptide repeat proteins">
    <link uri="https://ppr.plantenergy.uwa.edu.au"/>
</comment>
<evidence type="ECO:0000255" key="1"/>
<evidence type="ECO:0000305" key="2"/>
<protein>
    <recommendedName>
        <fullName>Pentatricopeptide repeat-containing protein At5g11310, mitochondrial</fullName>
    </recommendedName>
</protein>
<feature type="transit peptide" description="Mitochondrion" evidence="1">
    <location>
        <begin position="1"/>
        <end position="35"/>
    </location>
</feature>
<feature type="chain" id="PRO_0000363512" description="Pentatricopeptide repeat-containing protein At5g11310, mitochondrial">
    <location>
        <begin position="36"/>
        <end position="602"/>
    </location>
</feature>
<feature type="repeat" description="PPR 1">
    <location>
        <begin position="134"/>
        <end position="165"/>
    </location>
</feature>
<feature type="repeat" description="PPR 2">
    <location>
        <begin position="172"/>
        <end position="202"/>
    </location>
</feature>
<feature type="repeat" description="PPR 3">
    <location>
        <begin position="211"/>
        <end position="241"/>
    </location>
</feature>
<feature type="repeat" description="PPR 4">
    <location>
        <begin position="249"/>
        <end position="283"/>
    </location>
</feature>
<feature type="repeat" description="PPR 5">
    <location>
        <begin position="284"/>
        <end position="318"/>
    </location>
</feature>
<feature type="repeat" description="PPR 6">
    <location>
        <begin position="319"/>
        <end position="353"/>
    </location>
</feature>
<feature type="repeat" description="PPR 7">
    <location>
        <begin position="354"/>
        <end position="388"/>
    </location>
</feature>
<feature type="repeat" description="PPR 8">
    <location>
        <begin position="389"/>
        <end position="423"/>
    </location>
</feature>
<feature type="repeat" description="PPR 9">
    <location>
        <begin position="424"/>
        <end position="458"/>
    </location>
</feature>
<feature type="repeat" description="PPR 10">
    <location>
        <begin position="459"/>
        <end position="493"/>
    </location>
</feature>
<feature type="repeat" description="PPR 11">
    <location>
        <begin position="494"/>
        <end position="528"/>
    </location>
</feature>
<keyword id="KW-0496">Mitochondrion</keyword>
<keyword id="KW-1185">Reference proteome</keyword>
<keyword id="KW-0677">Repeat</keyword>
<keyword id="KW-0809">Transit peptide</keyword>
<dbReference type="EMBL" id="AL360314">
    <property type="protein sequence ID" value="CAB96666.1"/>
    <property type="molecule type" value="Genomic_DNA"/>
</dbReference>
<dbReference type="EMBL" id="CP002688">
    <property type="protein sequence ID" value="AED91658.1"/>
    <property type="molecule type" value="Genomic_DNA"/>
</dbReference>
<dbReference type="EMBL" id="AK229100">
    <property type="protein sequence ID" value="BAF00978.1"/>
    <property type="molecule type" value="mRNA"/>
</dbReference>
<dbReference type="RefSeq" id="NP_196692.1">
    <property type="nucleotide sequence ID" value="NM_121169.5"/>
</dbReference>
<dbReference type="SMR" id="Q9LFM6"/>
<dbReference type="FunCoup" id="Q9LFM6">
    <property type="interactions" value="563"/>
</dbReference>
<dbReference type="STRING" id="3702.Q9LFM6"/>
<dbReference type="PaxDb" id="3702-AT5G11310.1"/>
<dbReference type="ProteomicsDB" id="249004"/>
<dbReference type="EnsemblPlants" id="AT5G11310.1">
    <property type="protein sequence ID" value="AT5G11310.1"/>
    <property type="gene ID" value="AT5G11310"/>
</dbReference>
<dbReference type="GeneID" id="831002"/>
<dbReference type="Gramene" id="AT5G11310.1">
    <property type="protein sequence ID" value="AT5G11310.1"/>
    <property type="gene ID" value="AT5G11310"/>
</dbReference>
<dbReference type="KEGG" id="ath:AT5G11310"/>
<dbReference type="Araport" id="AT5G11310"/>
<dbReference type="TAIR" id="AT5G11310">
    <property type="gene designation" value="SOAR1"/>
</dbReference>
<dbReference type="eggNOG" id="KOG4197">
    <property type="taxonomic scope" value="Eukaryota"/>
</dbReference>
<dbReference type="HOGENOM" id="CLU_002706_49_20_1"/>
<dbReference type="InParanoid" id="Q9LFM6"/>
<dbReference type="OMA" id="NYFFRFF"/>
<dbReference type="PhylomeDB" id="Q9LFM6"/>
<dbReference type="PRO" id="PR:Q9LFM6"/>
<dbReference type="Proteomes" id="UP000006548">
    <property type="component" value="Chromosome 5"/>
</dbReference>
<dbReference type="ExpressionAtlas" id="Q9LFM6">
    <property type="expression patterns" value="baseline and differential"/>
</dbReference>
<dbReference type="GO" id="GO:0005829">
    <property type="term" value="C:cytosol"/>
    <property type="evidence" value="ECO:0000314"/>
    <property type="project" value="TAIR"/>
</dbReference>
<dbReference type="GO" id="GO:0005739">
    <property type="term" value="C:mitochondrion"/>
    <property type="evidence" value="ECO:0007669"/>
    <property type="project" value="UniProtKB-SubCell"/>
</dbReference>
<dbReference type="GO" id="GO:0005634">
    <property type="term" value="C:nucleus"/>
    <property type="evidence" value="ECO:0000314"/>
    <property type="project" value="TAIR"/>
</dbReference>
<dbReference type="GO" id="GO:0009788">
    <property type="term" value="P:negative regulation of abscisic acid-activated signaling pathway"/>
    <property type="evidence" value="ECO:0000315"/>
    <property type="project" value="TAIR"/>
</dbReference>
<dbReference type="GO" id="GO:0010029">
    <property type="term" value="P:regulation of seed germination"/>
    <property type="evidence" value="ECO:0000315"/>
    <property type="project" value="TAIR"/>
</dbReference>
<dbReference type="GO" id="GO:0009845">
    <property type="term" value="P:seed germination"/>
    <property type="evidence" value="ECO:0000315"/>
    <property type="project" value="TAIR"/>
</dbReference>
<dbReference type="FunFam" id="1.25.40.10:FF:003060">
    <property type="entry name" value="Pentatricopeptide repeat-containing protein At5g11310, mitochondrial"/>
    <property type="match status" value="1"/>
</dbReference>
<dbReference type="Gene3D" id="1.25.40.10">
    <property type="entry name" value="Tetratricopeptide repeat domain"/>
    <property type="match status" value="3"/>
</dbReference>
<dbReference type="InterPro" id="IPR002885">
    <property type="entry name" value="Pentatricopeptide_rpt"/>
</dbReference>
<dbReference type="InterPro" id="IPR011990">
    <property type="entry name" value="TPR-like_helical_dom_sf"/>
</dbReference>
<dbReference type="NCBIfam" id="TIGR00756">
    <property type="entry name" value="PPR"/>
    <property type="match status" value="5"/>
</dbReference>
<dbReference type="PANTHER" id="PTHR47932">
    <property type="entry name" value="ATPASE EXPRESSION PROTEIN 3"/>
    <property type="match status" value="1"/>
</dbReference>
<dbReference type="PANTHER" id="PTHR47932:SF63">
    <property type="entry name" value="OS08G0290000 PROTEIN"/>
    <property type="match status" value="1"/>
</dbReference>
<dbReference type="Pfam" id="PF01535">
    <property type="entry name" value="PPR"/>
    <property type="match status" value="2"/>
</dbReference>
<dbReference type="Pfam" id="PF13041">
    <property type="entry name" value="PPR_2"/>
    <property type="match status" value="3"/>
</dbReference>
<dbReference type="PROSITE" id="PS51375">
    <property type="entry name" value="PPR"/>
    <property type="match status" value="10"/>
</dbReference>
<reference key="1">
    <citation type="journal article" date="2000" name="Nature">
        <title>Sequence and analysis of chromosome 5 of the plant Arabidopsis thaliana.</title>
        <authorList>
            <person name="Tabata S."/>
            <person name="Kaneko T."/>
            <person name="Nakamura Y."/>
            <person name="Kotani H."/>
            <person name="Kato T."/>
            <person name="Asamizu E."/>
            <person name="Miyajima N."/>
            <person name="Sasamoto S."/>
            <person name="Kimura T."/>
            <person name="Hosouchi T."/>
            <person name="Kawashima K."/>
            <person name="Kohara M."/>
            <person name="Matsumoto M."/>
            <person name="Matsuno A."/>
            <person name="Muraki A."/>
            <person name="Nakayama S."/>
            <person name="Nakazaki N."/>
            <person name="Naruo K."/>
            <person name="Okumura S."/>
            <person name="Shinpo S."/>
            <person name="Takeuchi C."/>
            <person name="Wada T."/>
            <person name="Watanabe A."/>
            <person name="Yamada M."/>
            <person name="Yasuda M."/>
            <person name="Sato S."/>
            <person name="de la Bastide M."/>
            <person name="Huang E."/>
            <person name="Spiegel L."/>
            <person name="Gnoj L."/>
            <person name="O'Shaughnessy A."/>
            <person name="Preston R."/>
            <person name="Habermann K."/>
            <person name="Murray J."/>
            <person name="Johnson D."/>
            <person name="Rohlfing T."/>
            <person name="Nelson J."/>
            <person name="Stoneking T."/>
            <person name="Pepin K."/>
            <person name="Spieth J."/>
            <person name="Sekhon M."/>
            <person name="Armstrong J."/>
            <person name="Becker M."/>
            <person name="Belter E."/>
            <person name="Cordum H."/>
            <person name="Cordes M."/>
            <person name="Courtney L."/>
            <person name="Courtney W."/>
            <person name="Dante M."/>
            <person name="Du H."/>
            <person name="Edwards J."/>
            <person name="Fryman J."/>
            <person name="Haakensen B."/>
            <person name="Lamar E."/>
            <person name="Latreille P."/>
            <person name="Leonard S."/>
            <person name="Meyer R."/>
            <person name="Mulvaney E."/>
            <person name="Ozersky P."/>
            <person name="Riley A."/>
            <person name="Strowmatt C."/>
            <person name="Wagner-McPherson C."/>
            <person name="Wollam A."/>
            <person name="Yoakum M."/>
            <person name="Bell M."/>
            <person name="Dedhia N."/>
            <person name="Parnell L."/>
            <person name="Shah R."/>
            <person name="Rodriguez M."/>
            <person name="Hoon See L."/>
            <person name="Vil D."/>
            <person name="Baker J."/>
            <person name="Kirchoff K."/>
            <person name="Toth K."/>
            <person name="King L."/>
            <person name="Bahret A."/>
            <person name="Miller B."/>
            <person name="Marra M.A."/>
            <person name="Martienssen R."/>
            <person name="McCombie W.R."/>
            <person name="Wilson R.K."/>
            <person name="Murphy G."/>
            <person name="Bancroft I."/>
            <person name="Volckaert G."/>
            <person name="Wambutt R."/>
            <person name="Duesterhoeft A."/>
            <person name="Stiekema W."/>
            <person name="Pohl T."/>
            <person name="Entian K.-D."/>
            <person name="Terryn N."/>
            <person name="Hartley N."/>
            <person name="Bent E."/>
            <person name="Johnson S."/>
            <person name="Langham S.-A."/>
            <person name="McCullagh B."/>
            <person name="Robben J."/>
            <person name="Grymonprez B."/>
            <person name="Zimmermann W."/>
            <person name="Ramsperger U."/>
            <person name="Wedler H."/>
            <person name="Balke K."/>
            <person name="Wedler E."/>
            <person name="Peters S."/>
            <person name="van Staveren M."/>
            <person name="Dirkse W."/>
            <person name="Mooijman P."/>
            <person name="Klein Lankhorst R."/>
            <person name="Weitzenegger T."/>
            <person name="Bothe G."/>
            <person name="Rose M."/>
            <person name="Hauf J."/>
            <person name="Berneiser S."/>
            <person name="Hempel S."/>
            <person name="Feldpausch M."/>
            <person name="Lamberth S."/>
            <person name="Villarroel R."/>
            <person name="Gielen J."/>
            <person name="Ardiles W."/>
            <person name="Bents O."/>
            <person name="Lemcke K."/>
            <person name="Kolesov G."/>
            <person name="Mayer K.F.X."/>
            <person name="Rudd S."/>
            <person name="Schoof H."/>
            <person name="Schueller C."/>
            <person name="Zaccaria P."/>
            <person name="Mewes H.-W."/>
            <person name="Bevan M."/>
            <person name="Fransz P.F."/>
        </authorList>
    </citation>
    <scope>NUCLEOTIDE SEQUENCE [LARGE SCALE GENOMIC DNA]</scope>
    <source>
        <strain>cv. Columbia</strain>
    </source>
</reference>
<reference key="2">
    <citation type="journal article" date="2017" name="Plant J.">
        <title>Araport11: a complete reannotation of the Arabidopsis thaliana reference genome.</title>
        <authorList>
            <person name="Cheng C.Y."/>
            <person name="Krishnakumar V."/>
            <person name="Chan A.P."/>
            <person name="Thibaud-Nissen F."/>
            <person name="Schobel S."/>
            <person name="Town C.D."/>
        </authorList>
    </citation>
    <scope>GENOME REANNOTATION</scope>
    <source>
        <strain>cv. Columbia</strain>
    </source>
</reference>
<reference key="3">
    <citation type="submission" date="2006-07" db="EMBL/GenBank/DDBJ databases">
        <title>Large-scale analysis of RIKEN Arabidopsis full-length (RAFL) cDNAs.</title>
        <authorList>
            <person name="Totoki Y."/>
            <person name="Seki M."/>
            <person name="Ishida J."/>
            <person name="Nakajima M."/>
            <person name="Enju A."/>
            <person name="Kamiya A."/>
            <person name="Narusaka M."/>
            <person name="Shin-i T."/>
            <person name="Nakagawa M."/>
            <person name="Sakamoto N."/>
            <person name="Oishi K."/>
            <person name="Kohara Y."/>
            <person name="Kobayashi M."/>
            <person name="Toyoda A."/>
            <person name="Sakaki Y."/>
            <person name="Sakurai T."/>
            <person name="Iida K."/>
            <person name="Akiyama K."/>
            <person name="Satou M."/>
            <person name="Toyoda T."/>
            <person name="Konagaya A."/>
            <person name="Carninci P."/>
            <person name="Kawai J."/>
            <person name="Hayashizaki Y."/>
            <person name="Shinozaki K."/>
        </authorList>
    </citation>
    <scope>NUCLEOTIDE SEQUENCE [LARGE SCALE MRNA]</scope>
    <source>
        <strain>cv. Columbia</strain>
    </source>
</reference>
<reference key="4">
    <citation type="journal article" date="2004" name="Plant Cell">
        <title>Genome-wide analysis of Arabidopsis pentatricopeptide repeat proteins reveals their essential role in organelle biogenesis.</title>
        <authorList>
            <person name="Lurin C."/>
            <person name="Andres C."/>
            <person name="Aubourg S."/>
            <person name="Bellaoui M."/>
            <person name="Bitton F."/>
            <person name="Bruyere C."/>
            <person name="Caboche M."/>
            <person name="Debast C."/>
            <person name="Gualberto J."/>
            <person name="Hoffmann B."/>
            <person name="Lecharny A."/>
            <person name="Le Ret M."/>
            <person name="Martin-Magniette M.-L."/>
            <person name="Mireau H."/>
            <person name="Peeters N."/>
            <person name="Renou J.-P."/>
            <person name="Szurek B."/>
            <person name="Taconnat L."/>
            <person name="Small I."/>
        </authorList>
    </citation>
    <scope>GENE FAMILY</scope>
</reference>
<gene>
    <name type="ordered locus">At5g11310</name>
    <name type="ORF">F2I11_200</name>
</gene>
<name>PP375_ARATH</name>
<sequence>MNSLFTAFRRNLLLNPNPHRNFFLHRLLSSSRRSSPLIPVEPLIQRIQSPAVPDSTCTPPQQNTVSKTDLSTISNLLENTDVVPGSSLESALDETGIEPSVELVHALFDRLSSSPMLLHSVFKWAEMKPGFTLSPSLFDSVVNSLCKAREFEIAWSLVFDRVRSDEGSNLVSADTFIVLIRRYARAGMVQQAIRAFEFARSYEPVCKSATELRLLEVLLDALCKEGHVREASMYLERIGGTMDSNWVPSVRIFNILLNGWFRSRKLKQAEKLWEEMKAMNVKPTVVTYGTLIEGYCRMRRVQIAMEVLEEMKMAEMEINFMVFNPIIDGLGEAGRLSEALGMMERFFVCESGPTIVTYNSLVKNFCKAGDLPGASKILKMMMTRGVDPTTTTYNHFFKYFSKHNKTEEGMNLYFKLIEAGHSPDRLTYHLILKMLCEDGKLSLAMQVNKEMKNRGIDPDLLTTTMLIHLLCRLEMLEEAFEEFDNAVRRGIIPQYITFKMIDNGLRSKGMSDMAKRLSSLMSSLPHSKKLPNTYREAVDAPPDKDRRKSILHRAEAMSDVLKGCRNPRKLVKMRGSHKKAVGEDINLIDDINERNGDAGDFE</sequence>